<dbReference type="EC" id="2.5.1.6" evidence="1"/>
<dbReference type="EMBL" id="CP001359">
    <property type="protein sequence ID" value="ACL63531.1"/>
    <property type="molecule type" value="Genomic_DNA"/>
</dbReference>
<dbReference type="RefSeq" id="WP_012631602.1">
    <property type="nucleotide sequence ID" value="NC_011891.1"/>
</dbReference>
<dbReference type="SMR" id="B8J8T3"/>
<dbReference type="KEGG" id="acp:A2cp1_0172"/>
<dbReference type="HOGENOM" id="CLU_041802_1_1_7"/>
<dbReference type="UniPathway" id="UPA00315">
    <property type="reaction ID" value="UER00080"/>
</dbReference>
<dbReference type="Proteomes" id="UP000007089">
    <property type="component" value="Chromosome"/>
</dbReference>
<dbReference type="GO" id="GO:0005737">
    <property type="term" value="C:cytoplasm"/>
    <property type="evidence" value="ECO:0007669"/>
    <property type="project" value="UniProtKB-SubCell"/>
</dbReference>
<dbReference type="GO" id="GO:0005524">
    <property type="term" value="F:ATP binding"/>
    <property type="evidence" value="ECO:0007669"/>
    <property type="project" value="UniProtKB-UniRule"/>
</dbReference>
<dbReference type="GO" id="GO:0000287">
    <property type="term" value="F:magnesium ion binding"/>
    <property type="evidence" value="ECO:0007669"/>
    <property type="project" value="UniProtKB-UniRule"/>
</dbReference>
<dbReference type="GO" id="GO:0004478">
    <property type="term" value="F:methionine adenosyltransferase activity"/>
    <property type="evidence" value="ECO:0007669"/>
    <property type="project" value="UniProtKB-UniRule"/>
</dbReference>
<dbReference type="GO" id="GO:0006730">
    <property type="term" value="P:one-carbon metabolic process"/>
    <property type="evidence" value="ECO:0007669"/>
    <property type="project" value="UniProtKB-KW"/>
</dbReference>
<dbReference type="GO" id="GO:0006556">
    <property type="term" value="P:S-adenosylmethionine biosynthetic process"/>
    <property type="evidence" value="ECO:0007669"/>
    <property type="project" value="UniProtKB-UniRule"/>
</dbReference>
<dbReference type="CDD" id="cd18079">
    <property type="entry name" value="S-AdoMet_synt"/>
    <property type="match status" value="1"/>
</dbReference>
<dbReference type="FunFam" id="3.30.300.10:FF:000003">
    <property type="entry name" value="S-adenosylmethionine synthase"/>
    <property type="match status" value="1"/>
</dbReference>
<dbReference type="Gene3D" id="3.30.300.10">
    <property type="match status" value="3"/>
</dbReference>
<dbReference type="HAMAP" id="MF_00086">
    <property type="entry name" value="S_AdoMet_synth1"/>
    <property type="match status" value="1"/>
</dbReference>
<dbReference type="InterPro" id="IPR022631">
    <property type="entry name" value="ADOMET_SYNTHASE_CS"/>
</dbReference>
<dbReference type="InterPro" id="IPR022630">
    <property type="entry name" value="S-AdoMet_synt_C"/>
</dbReference>
<dbReference type="InterPro" id="IPR022629">
    <property type="entry name" value="S-AdoMet_synt_central"/>
</dbReference>
<dbReference type="InterPro" id="IPR022628">
    <property type="entry name" value="S-AdoMet_synt_N"/>
</dbReference>
<dbReference type="InterPro" id="IPR002133">
    <property type="entry name" value="S-AdoMet_synthetase"/>
</dbReference>
<dbReference type="InterPro" id="IPR022636">
    <property type="entry name" value="S-AdoMet_synthetase_sfam"/>
</dbReference>
<dbReference type="NCBIfam" id="TIGR01034">
    <property type="entry name" value="metK"/>
    <property type="match status" value="1"/>
</dbReference>
<dbReference type="PANTHER" id="PTHR11964">
    <property type="entry name" value="S-ADENOSYLMETHIONINE SYNTHETASE"/>
    <property type="match status" value="1"/>
</dbReference>
<dbReference type="Pfam" id="PF02773">
    <property type="entry name" value="S-AdoMet_synt_C"/>
    <property type="match status" value="1"/>
</dbReference>
<dbReference type="Pfam" id="PF02772">
    <property type="entry name" value="S-AdoMet_synt_M"/>
    <property type="match status" value="1"/>
</dbReference>
<dbReference type="Pfam" id="PF00438">
    <property type="entry name" value="S-AdoMet_synt_N"/>
    <property type="match status" value="1"/>
</dbReference>
<dbReference type="PIRSF" id="PIRSF000497">
    <property type="entry name" value="MAT"/>
    <property type="match status" value="1"/>
</dbReference>
<dbReference type="SUPFAM" id="SSF55973">
    <property type="entry name" value="S-adenosylmethionine synthetase"/>
    <property type="match status" value="3"/>
</dbReference>
<dbReference type="PROSITE" id="PS00376">
    <property type="entry name" value="ADOMET_SYNTHASE_1"/>
    <property type="match status" value="1"/>
</dbReference>
<dbReference type="PROSITE" id="PS00377">
    <property type="entry name" value="ADOMET_SYNTHASE_2"/>
    <property type="match status" value="1"/>
</dbReference>
<feature type="chain" id="PRO_1000196681" description="S-adenosylmethionine synthase">
    <location>
        <begin position="1"/>
        <end position="390"/>
    </location>
</feature>
<feature type="region of interest" description="Flexible loop" evidence="1">
    <location>
        <begin position="101"/>
        <end position="111"/>
    </location>
</feature>
<feature type="binding site" description="in other chain" evidence="1">
    <location>
        <position position="17"/>
    </location>
    <ligand>
        <name>ATP</name>
        <dbReference type="ChEBI" id="CHEBI:30616"/>
        <note>ligand shared between two neighboring subunits</note>
    </ligand>
</feature>
<feature type="binding site" evidence="1">
    <location>
        <position position="19"/>
    </location>
    <ligand>
        <name>Mg(2+)</name>
        <dbReference type="ChEBI" id="CHEBI:18420"/>
    </ligand>
</feature>
<feature type="binding site" evidence="1">
    <location>
        <position position="45"/>
    </location>
    <ligand>
        <name>K(+)</name>
        <dbReference type="ChEBI" id="CHEBI:29103"/>
    </ligand>
</feature>
<feature type="binding site" description="in other chain" evidence="1">
    <location>
        <position position="58"/>
    </location>
    <ligand>
        <name>L-methionine</name>
        <dbReference type="ChEBI" id="CHEBI:57844"/>
        <note>ligand shared between two neighboring subunits</note>
    </ligand>
</feature>
<feature type="binding site" description="in other chain" evidence="1">
    <location>
        <position position="101"/>
    </location>
    <ligand>
        <name>L-methionine</name>
        <dbReference type="ChEBI" id="CHEBI:57844"/>
        <note>ligand shared between two neighboring subunits</note>
    </ligand>
</feature>
<feature type="binding site" description="in other chain" evidence="1">
    <location>
        <begin position="160"/>
        <end position="162"/>
    </location>
    <ligand>
        <name>ATP</name>
        <dbReference type="ChEBI" id="CHEBI:30616"/>
        <note>ligand shared between two neighboring subunits</note>
    </ligand>
</feature>
<feature type="binding site" description="in other chain" evidence="1">
    <location>
        <begin position="226"/>
        <end position="227"/>
    </location>
    <ligand>
        <name>ATP</name>
        <dbReference type="ChEBI" id="CHEBI:30616"/>
        <note>ligand shared between two neighboring subunits</note>
    </ligand>
</feature>
<feature type="binding site" evidence="1">
    <location>
        <position position="235"/>
    </location>
    <ligand>
        <name>ATP</name>
        <dbReference type="ChEBI" id="CHEBI:30616"/>
        <note>ligand shared between two neighboring subunits</note>
    </ligand>
</feature>
<feature type="binding site" evidence="1">
    <location>
        <position position="235"/>
    </location>
    <ligand>
        <name>L-methionine</name>
        <dbReference type="ChEBI" id="CHEBI:57844"/>
        <note>ligand shared between two neighboring subunits</note>
    </ligand>
</feature>
<feature type="binding site" description="in other chain" evidence="1">
    <location>
        <begin position="241"/>
        <end position="242"/>
    </location>
    <ligand>
        <name>ATP</name>
        <dbReference type="ChEBI" id="CHEBI:30616"/>
        <note>ligand shared between two neighboring subunits</note>
    </ligand>
</feature>
<feature type="binding site" evidence="1">
    <location>
        <position position="258"/>
    </location>
    <ligand>
        <name>ATP</name>
        <dbReference type="ChEBI" id="CHEBI:30616"/>
        <note>ligand shared between two neighboring subunits</note>
    </ligand>
</feature>
<feature type="binding site" evidence="1">
    <location>
        <position position="262"/>
    </location>
    <ligand>
        <name>ATP</name>
        <dbReference type="ChEBI" id="CHEBI:30616"/>
        <note>ligand shared between two neighboring subunits</note>
    </ligand>
</feature>
<feature type="binding site" description="in other chain" evidence="1">
    <location>
        <position position="266"/>
    </location>
    <ligand>
        <name>L-methionine</name>
        <dbReference type="ChEBI" id="CHEBI:57844"/>
        <note>ligand shared between two neighboring subunits</note>
    </ligand>
</feature>
<sequence length="390" mass="42005">MPLQDFLFTSESVTEGHPDKMADQISDAVLDAVLRQDPKGRVACETLLKTGYVMIAGEITTKARIDYPKLARETVRRIGYTSGDMGFDANTCAVLVAVDQQSPDIGQGVDTGGAGDQGMMFGYACDETPELMPAPIQYAHAVTKQLAKARRAGLDFLRPDGKSQVSVEYRDGRPVRIDTVVVSTQHAESVSNKRLHEAVREQVIAKALPKRLLDRKTRILINPTGRFVIGGPMGDTGVTGRKIIVDTYGGMGRHGGGAFSGKDPSKVDRSAAYMGRYIAKNVVAAGLASRCEVQVAYAIGVAEPVSVMVDTFGTAKVPEGKIARAVREVFGLTPRAIIEGLDLLRPVYEKTAAYGHFGRTEKTFTWERTDKKDALADAAGLSKIRAVASV</sequence>
<evidence type="ECO:0000255" key="1">
    <source>
        <dbReference type="HAMAP-Rule" id="MF_00086"/>
    </source>
</evidence>
<name>METK_ANAD2</name>
<protein>
    <recommendedName>
        <fullName evidence="1">S-adenosylmethionine synthase</fullName>
        <shortName evidence="1">AdoMet synthase</shortName>
        <ecNumber evidence="1">2.5.1.6</ecNumber>
    </recommendedName>
    <alternativeName>
        <fullName evidence="1">MAT</fullName>
    </alternativeName>
    <alternativeName>
        <fullName evidence="1">Methionine adenosyltransferase</fullName>
    </alternativeName>
</protein>
<keyword id="KW-0067">ATP-binding</keyword>
<keyword id="KW-0963">Cytoplasm</keyword>
<keyword id="KW-0460">Magnesium</keyword>
<keyword id="KW-0479">Metal-binding</keyword>
<keyword id="KW-0547">Nucleotide-binding</keyword>
<keyword id="KW-0554">One-carbon metabolism</keyword>
<keyword id="KW-0630">Potassium</keyword>
<keyword id="KW-0808">Transferase</keyword>
<accession>B8J8T3</accession>
<comment type="function">
    <text evidence="1">Catalyzes the formation of S-adenosylmethionine (AdoMet) from methionine and ATP. The overall synthetic reaction is composed of two sequential steps, AdoMet formation and the subsequent tripolyphosphate hydrolysis which occurs prior to release of AdoMet from the enzyme.</text>
</comment>
<comment type="catalytic activity">
    <reaction evidence="1">
        <text>L-methionine + ATP + H2O = S-adenosyl-L-methionine + phosphate + diphosphate</text>
        <dbReference type="Rhea" id="RHEA:21080"/>
        <dbReference type="ChEBI" id="CHEBI:15377"/>
        <dbReference type="ChEBI" id="CHEBI:30616"/>
        <dbReference type="ChEBI" id="CHEBI:33019"/>
        <dbReference type="ChEBI" id="CHEBI:43474"/>
        <dbReference type="ChEBI" id="CHEBI:57844"/>
        <dbReference type="ChEBI" id="CHEBI:59789"/>
        <dbReference type="EC" id="2.5.1.6"/>
    </reaction>
</comment>
<comment type="cofactor">
    <cofactor evidence="1">
        <name>Mg(2+)</name>
        <dbReference type="ChEBI" id="CHEBI:18420"/>
    </cofactor>
    <text evidence="1">Binds 2 divalent ions per subunit.</text>
</comment>
<comment type="cofactor">
    <cofactor evidence="1">
        <name>K(+)</name>
        <dbReference type="ChEBI" id="CHEBI:29103"/>
    </cofactor>
    <text evidence="1">Binds 1 potassium ion per subunit.</text>
</comment>
<comment type="pathway">
    <text evidence="1">Amino-acid biosynthesis; S-adenosyl-L-methionine biosynthesis; S-adenosyl-L-methionine from L-methionine: step 1/1.</text>
</comment>
<comment type="subunit">
    <text evidence="1">Homotetramer; dimer of dimers.</text>
</comment>
<comment type="subcellular location">
    <subcellularLocation>
        <location evidence="1">Cytoplasm</location>
    </subcellularLocation>
</comment>
<comment type="similarity">
    <text evidence="1">Belongs to the AdoMet synthase family.</text>
</comment>
<proteinExistence type="inferred from homology"/>
<reference key="1">
    <citation type="submission" date="2009-01" db="EMBL/GenBank/DDBJ databases">
        <title>Complete sequence of Anaeromyxobacter dehalogenans 2CP-1.</title>
        <authorList>
            <person name="Lucas S."/>
            <person name="Copeland A."/>
            <person name="Lapidus A."/>
            <person name="Glavina del Rio T."/>
            <person name="Dalin E."/>
            <person name="Tice H."/>
            <person name="Bruce D."/>
            <person name="Goodwin L."/>
            <person name="Pitluck S."/>
            <person name="Saunders E."/>
            <person name="Brettin T."/>
            <person name="Detter J.C."/>
            <person name="Han C."/>
            <person name="Larimer F."/>
            <person name="Land M."/>
            <person name="Hauser L."/>
            <person name="Kyrpides N."/>
            <person name="Ovchinnikova G."/>
            <person name="Beliaev A.S."/>
            <person name="Richardson P."/>
        </authorList>
    </citation>
    <scope>NUCLEOTIDE SEQUENCE [LARGE SCALE GENOMIC DNA]</scope>
    <source>
        <strain>2CP-1 / ATCC BAA-258</strain>
    </source>
</reference>
<organism>
    <name type="scientific">Anaeromyxobacter dehalogenans (strain 2CP-1 / ATCC BAA-258)</name>
    <dbReference type="NCBI Taxonomy" id="455488"/>
    <lineage>
        <taxon>Bacteria</taxon>
        <taxon>Pseudomonadati</taxon>
        <taxon>Myxococcota</taxon>
        <taxon>Myxococcia</taxon>
        <taxon>Myxococcales</taxon>
        <taxon>Cystobacterineae</taxon>
        <taxon>Anaeromyxobacteraceae</taxon>
        <taxon>Anaeromyxobacter</taxon>
    </lineage>
</organism>
<gene>
    <name evidence="1" type="primary">metK</name>
    <name type="ordered locus">A2cp1_0172</name>
</gene>